<comment type="function">
    <text evidence="3">DNA-dependent RNA polymerase catalyzes the transcription of DNA into RNA using the four ribonucleoside triphosphates as substrates. Second largest core component of RNA polymerase I which synthesizes ribosomal RNA precursors. Proposed to contribute to the polymerase catalytic activity and forms the polymerase active center together with the largest subunit. Pol I is composed of mobile elements and RPA2 is part of the core element with the central large cleft and probably a clamp element that moves to open and close the cleft.</text>
</comment>
<comment type="catalytic activity">
    <reaction evidence="3">
        <text>RNA(n) + a ribonucleoside 5'-triphosphate = RNA(n+1) + diphosphate</text>
        <dbReference type="Rhea" id="RHEA:21248"/>
        <dbReference type="Rhea" id="RHEA-COMP:14527"/>
        <dbReference type="Rhea" id="RHEA-COMP:17342"/>
        <dbReference type="ChEBI" id="CHEBI:33019"/>
        <dbReference type="ChEBI" id="CHEBI:61557"/>
        <dbReference type="ChEBI" id="CHEBI:140395"/>
        <dbReference type="EC" id="2.7.7.6"/>
    </reaction>
    <physiologicalReaction direction="left-to-right" evidence="3">
        <dbReference type="Rhea" id="RHEA:21249"/>
    </physiologicalReaction>
</comment>
<comment type="subunit">
    <text evidence="3">Component of the RNA polymerase I (Pol I) complex consisting of at least 13 subunits.</text>
</comment>
<comment type="subcellular location">
    <subcellularLocation>
        <location evidence="3">Nucleus</location>
        <location evidence="3">Nucleolus</location>
    </subcellularLocation>
    <subcellularLocation>
        <location evidence="2">Chromosome</location>
    </subcellularLocation>
</comment>
<comment type="disruption phenotype">
    <text evidence="4">Knockdown of the gene by morpholino antisense oligomer reduces neural crest cell migration and causes severe craniofacial defects.</text>
</comment>
<comment type="similarity">
    <text evidence="5">Belongs to the RNA polymerase beta chain family.</text>
</comment>
<organism>
    <name type="scientific">Danio rerio</name>
    <name type="common">Zebrafish</name>
    <name type="synonym">Brachydanio rerio</name>
    <dbReference type="NCBI Taxonomy" id="7955"/>
    <lineage>
        <taxon>Eukaryota</taxon>
        <taxon>Metazoa</taxon>
        <taxon>Chordata</taxon>
        <taxon>Craniata</taxon>
        <taxon>Vertebrata</taxon>
        <taxon>Euteleostomi</taxon>
        <taxon>Actinopterygii</taxon>
        <taxon>Neopterygii</taxon>
        <taxon>Teleostei</taxon>
        <taxon>Ostariophysi</taxon>
        <taxon>Cypriniformes</taxon>
        <taxon>Danionidae</taxon>
        <taxon>Danioninae</taxon>
        <taxon>Danio</taxon>
    </lineage>
</organism>
<dbReference type="EC" id="2.7.7.6" evidence="3"/>
<dbReference type="EMBL" id="CT583720">
    <property type="status" value="NOT_ANNOTATED_CDS"/>
    <property type="molecule type" value="Genomic_DNA"/>
</dbReference>
<dbReference type="EMBL" id="CU137726">
    <property type="status" value="NOT_ANNOTATED_CDS"/>
    <property type="molecule type" value="Genomic_DNA"/>
</dbReference>
<dbReference type="SMR" id="B8JKD7"/>
<dbReference type="FunCoup" id="B8JKD7">
    <property type="interactions" value="1405"/>
</dbReference>
<dbReference type="STRING" id="7955.ENSDARP00000100185"/>
<dbReference type="PaxDb" id="7955-ENSDARP00000100185"/>
<dbReference type="PeptideAtlas" id="B8JKD7"/>
<dbReference type="Ensembl" id="ENSDART00000114741">
    <property type="protein sequence ID" value="ENSDARP00000100185"/>
    <property type="gene ID" value="ENSDARG00000077469"/>
</dbReference>
<dbReference type="Ensembl" id="ENSDART00000169546">
    <property type="protein sequence ID" value="ENSDARP00000133883"/>
    <property type="gene ID" value="ENSDARG00000115880"/>
</dbReference>
<dbReference type="eggNOG" id="KOG0216">
    <property type="taxonomic scope" value="Eukaryota"/>
</dbReference>
<dbReference type="HOGENOM" id="CLU_000524_5_1_1"/>
<dbReference type="InParanoid" id="B8JKD7"/>
<dbReference type="OMA" id="FFGVVHY"/>
<dbReference type="PhylomeDB" id="B8JKD7"/>
<dbReference type="TreeFam" id="TF103055"/>
<dbReference type="PRO" id="PR:B8JKD7"/>
<dbReference type="Proteomes" id="UP000000437">
    <property type="component" value="Unplaced"/>
</dbReference>
<dbReference type="GO" id="GO:0005694">
    <property type="term" value="C:chromosome"/>
    <property type="evidence" value="ECO:0007669"/>
    <property type="project" value="UniProtKB-SubCell"/>
</dbReference>
<dbReference type="GO" id="GO:0000428">
    <property type="term" value="C:DNA-directed RNA polymerase complex"/>
    <property type="evidence" value="ECO:0007669"/>
    <property type="project" value="UniProtKB-KW"/>
</dbReference>
<dbReference type="GO" id="GO:0005739">
    <property type="term" value="C:mitochondrion"/>
    <property type="evidence" value="ECO:0007669"/>
    <property type="project" value="GOC"/>
</dbReference>
<dbReference type="GO" id="GO:0005730">
    <property type="term" value="C:nucleolus"/>
    <property type="evidence" value="ECO:0007669"/>
    <property type="project" value="UniProtKB-SubCell"/>
</dbReference>
<dbReference type="GO" id="GO:0003677">
    <property type="term" value="F:DNA binding"/>
    <property type="evidence" value="ECO:0007669"/>
    <property type="project" value="InterPro"/>
</dbReference>
<dbReference type="GO" id="GO:0003899">
    <property type="term" value="F:DNA-directed RNA polymerase activity"/>
    <property type="evidence" value="ECO:0007669"/>
    <property type="project" value="UniProtKB-EC"/>
</dbReference>
<dbReference type="GO" id="GO:0032549">
    <property type="term" value="F:ribonucleoside binding"/>
    <property type="evidence" value="ECO:0007669"/>
    <property type="project" value="InterPro"/>
</dbReference>
<dbReference type="GO" id="GO:0008270">
    <property type="term" value="F:zinc ion binding"/>
    <property type="evidence" value="ECO:0007669"/>
    <property type="project" value="UniProtKB-KW"/>
</dbReference>
<dbReference type="GO" id="GO:0006351">
    <property type="term" value="P:DNA-templated transcription"/>
    <property type="evidence" value="ECO:0007669"/>
    <property type="project" value="InterPro"/>
</dbReference>
<dbReference type="GO" id="GO:0014029">
    <property type="term" value="P:neural crest formation"/>
    <property type="evidence" value="ECO:0000315"/>
    <property type="project" value="UniProtKB"/>
</dbReference>
<dbReference type="CDD" id="cd00653">
    <property type="entry name" value="RNA_pol_B_RPB2"/>
    <property type="match status" value="1"/>
</dbReference>
<dbReference type="FunFam" id="2.40.270.10:FF:000006">
    <property type="entry name" value="DNA-directed RNA polymerase subunit beta"/>
    <property type="match status" value="1"/>
</dbReference>
<dbReference type="FunFam" id="2.40.270.10:FF:000011">
    <property type="entry name" value="DNA-directed RNA polymerase subunit beta"/>
    <property type="match status" value="1"/>
</dbReference>
<dbReference type="FunFam" id="2.40.50.150:FF:000004">
    <property type="entry name" value="DNA-directed RNA polymerase subunit beta"/>
    <property type="match status" value="1"/>
</dbReference>
<dbReference type="FunFam" id="3.90.1070.20:FF:000003">
    <property type="entry name" value="DNA-directed RNA polymerase subunit beta"/>
    <property type="match status" value="1"/>
</dbReference>
<dbReference type="FunFam" id="3.90.1100.10:FF:000008">
    <property type="entry name" value="DNA-directed RNA polymerase subunit beta"/>
    <property type="match status" value="1"/>
</dbReference>
<dbReference type="FunFam" id="3.90.1100.10:FF:000016">
    <property type="entry name" value="DNA-directed RNA polymerase subunit beta"/>
    <property type="match status" value="1"/>
</dbReference>
<dbReference type="FunFam" id="3.90.1110.10:FF:000008">
    <property type="entry name" value="DNA-directed RNA polymerase subunit beta"/>
    <property type="match status" value="1"/>
</dbReference>
<dbReference type="FunFam" id="3.90.1800.10:FF:000004">
    <property type="entry name" value="DNA-directed RNA polymerase subunit beta"/>
    <property type="match status" value="1"/>
</dbReference>
<dbReference type="Gene3D" id="2.40.50.150">
    <property type="match status" value="1"/>
</dbReference>
<dbReference type="Gene3D" id="3.90.1070.20">
    <property type="match status" value="1"/>
</dbReference>
<dbReference type="Gene3D" id="3.90.1100.10">
    <property type="match status" value="1"/>
</dbReference>
<dbReference type="Gene3D" id="2.40.270.10">
    <property type="entry name" value="DNA-directed RNA polymerase, subunit 2, domain 6"/>
    <property type="match status" value="1"/>
</dbReference>
<dbReference type="Gene3D" id="3.90.1800.10">
    <property type="entry name" value="RNA polymerase alpha subunit dimerisation domain"/>
    <property type="match status" value="1"/>
</dbReference>
<dbReference type="Gene3D" id="3.90.1110.10">
    <property type="entry name" value="RNA polymerase Rpb2, domain 2"/>
    <property type="match status" value="1"/>
</dbReference>
<dbReference type="InterPro" id="IPR015712">
    <property type="entry name" value="DNA-dir_RNA_pol_su2"/>
</dbReference>
<dbReference type="InterPro" id="IPR007120">
    <property type="entry name" value="DNA-dir_RNAP_su2_dom"/>
</dbReference>
<dbReference type="InterPro" id="IPR037033">
    <property type="entry name" value="DNA-dir_RNAP_su2_hyb_sf"/>
</dbReference>
<dbReference type="InterPro" id="IPR007121">
    <property type="entry name" value="RNA_pol_bsu_CS"/>
</dbReference>
<dbReference type="InterPro" id="IPR007644">
    <property type="entry name" value="RNA_pol_bsu_protrusion"/>
</dbReference>
<dbReference type="InterPro" id="IPR007642">
    <property type="entry name" value="RNA_pol_Rpb2_2"/>
</dbReference>
<dbReference type="InterPro" id="IPR037034">
    <property type="entry name" value="RNA_pol_Rpb2_2_sf"/>
</dbReference>
<dbReference type="InterPro" id="IPR007645">
    <property type="entry name" value="RNA_pol_Rpb2_3"/>
</dbReference>
<dbReference type="InterPro" id="IPR007641">
    <property type="entry name" value="RNA_pol_Rpb2_7"/>
</dbReference>
<dbReference type="InterPro" id="IPR014724">
    <property type="entry name" value="RNA_pol_RPB2_OB-fold"/>
</dbReference>
<dbReference type="InterPro" id="IPR009674">
    <property type="entry name" value="Rpa2_dom_4"/>
</dbReference>
<dbReference type="PANTHER" id="PTHR20856">
    <property type="entry name" value="DNA-DIRECTED RNA POLYMERASE I SUBUNIT 2"/>
    <property type="match status" value="1"/>
</dbReference>
<dbReference type="Pfam" id="PF06883">
    <property type="entry name" value="RNA_pol_Rpa2_4"/>
    <property type="match status" value="1"/>
</dbReference>
<dbReference type="Pfam" id="PF04563">
    <property type="entry name" value="RNA_pol_Rpb2_1"/>
    <property type="match status" value="1"/>
</dbReference>
<dbReference type="Pfam" id="PF04561">
    <property type="entry name" value="RNA_pol_Rpb2_2"/>
    <property type="match status" value="1"/>
</dbReference>
<dbReference type="Pfam" id="PF04565">
    <property type="entry name" value="RNA_pol_Rpb2_3"/>
    <property type="match status" value="1"/>
</dbReference>
<dbReference type="Pfam" id="PF00562">
    <property type="entry name" value="RNA_pol_Rpb2_6"/>
    <property type="match status" value="1"/>
</dbReference>
<dbReference type="Pfam" id="PF04560">
    <property type="entry name" value="RNA_pol_Rpb2_7"/>
    <property type="match status" value="1"/>
</dbReference>
<dbReference type="SUPFAM" id="SSF64484">
    <property type="entry name" value="beta and beta-prime subunits of DNA dependent RNA-polymerase"/>
    <property type="match status" value="1"/>
</dbReference>
<dbReference type="PROSITE" id="PS01166">
    <property type="entry name" value="RNA_POL_BETA"/>
    <property type="match status" value="1"/>
</dbReference>
<feature type="chain" id="PRO_0000452843" description="DNA-directed RNA polymerase I subunit RPA2">
    <location>
        <begin position="1"/>
        <end position="1132"/>
    </location>
</feature>
<feature type="zinc finger region" description="C4-type" evidence="1">
    <location>
        <begin position="1067"/>
        <end position="1098"/>
    </location>
</feature>
<sequence>MDLSKWCNLKTEPSLKHLTEAGFGVPKEKQSVPVQELVKAHIESFDQAVTDGLCRVVEAIPPMEFLYKGDRISLSFVEAIIHTPSVSKGGISRDLRVFPAECRGRRCTYRAKLVADVSWSVNGVPKGIIKQSLGQMPIMVKSKLCNLHGLSPKELLEHHEEAEEMGGYFIVNGIEKVIRLLIMPRRNYPIAVSRPKFKSRGQGYTQYAISMRCVKEEHTAINMNLHYLDNGTVMVNFIYRKELFFLPLGFALKALVDYSDYQIYQELIKGREDNSFYKSCVSEMLRIVMDQGCTTKIKVLNYLGERFRVKLNLPEWFTHEQCAHFLLDECLCIHLKTDVEKFYMLCLMTRKLFSFAKQECMEENPDSPMFHEVLTPGQLYLMFLKEKMEGWLVSVKLALEKKPQRVGGLTPDSMTKLFNMGTDLTKAFEYLLATGNLMSKTGLGMLQNSGLCVVADKLNFIRYLSHFRCVHRGAAFAKMRTTTVRKLLPESWGFLCPVHTPDGEPCGLMNHMTAHCEIVAPVYPTSTLPGLLCSLGVNAADGNPGQAYSDCYPVILDGAMIGWVEKEVAPSVIESLRRFKVLGEKKVPPWTEIVLVPQTGKASLYPGLYLFTTPCRMVRTVRNLSLGKQELIGIFEQVYLNVGIFEKEIEDGVTTHQELFPHSMLSVVAEFIPFSDHNQSPRNMYQCQMSKQTMGFPLHSYQYRSDNKLYRLQTPQSPLVRPAMYDHYDVDNYPIGTNAIVAVISYTGYDMEDAMIVNKSSWERGFAHGSVYKTEIIDLSEKVKGDDSIVFGVKPGDPKVMGKLDADGLPFIGSVLKYGDPFYGYISLNTGQSHVYFYKYQESCVVDNIKVCSNETGTGRFKRICVTSRVPRNPTIGDKFASRHGQKGILSRLWPAEDMPFTESGMSPDILFNPHGFPSRMTIGMLIESMAGKSASLHGLCHDATPFTFSEENSALEHFGELLKAAGYNYYGTERLYSGLSGLELEADIFIGVVYYQRLRHMVSDKFQVRTTGARDKVTNQPMGGRNVQGGIRFGEMERDALLAHGTSFLLHDRLFNCSDRSVAQVCMDCGSLLSPLLEKPPPNWSATRHRKTICLLCNKSDSIETVSVPYVFKYFVAELAAMNIKIKLDVK</sequence>
<accession>B8JKD7</accession>
<keyword id="KW-0158">Chromosome</keyword>
<keyword id="KW-0240">DNA-directed RNA polymerase</keyword>
<keyword id="KW-0479">Metal-binding</keyword>
<keyword id="KW-0548">Nucleotidyltransferase</keyword>
<keyword id="KW-0539">Nucleus</keyword>
<keyword id="KW-0597">Phosphoprotein</keyword>
<keyword id="KW-1185">Reference proteome</keyword>
<keyword id="KW-0804">Transcription</keyword>
<keyword id="KW-0808">Transferase</keyword>
<keyword id="KW-0862">Zinc</keyword>
<keyword id="KW-0863">Zinc-finger</keyword>
<evidence type="ECO:0000250" key="1">
    <source>
        <dbReference type="UniProtKB" id="P22138"/>
    </source>
</evidence>
<evidence type="ECO:0000250" key="2">
    <source>
        <dbReference type="UniProtKB" id="P70700"/>
    </source>
</evidence>
<evidence type="ECO:0000250" key="3">
    <source>
        <dbReference type="UniProtKB" id="Q9H9Y6"/>
    </source>
</evidence>
<evidence type="ECO:0000269" key="4">
    <source>
    </source>
</evidence>
<evidence type="ECO:0000305" key="5"/>
<reference key="1">
    <citation type="journal article" date="2013" name="Nature">
        <title>The zebrafish reference genome sequence and its relationship to the human genome.</title>
        <authorList>
            <person name="Howe K."/>
            <person name="Clark M.D."/>
            <person name="Torroja C.F."/>
            <person name="Torrance J."/>
            <person name="Berthelot C."/>
            <person name="Muffato M."/>
            <person name="Collins J.E."/>
            <person name="Humphray S."/>
            <person name="McLaren K."/>
            <person name="Matthews L."/>
            <person name="McLaren S."/>
            <person name="Sealy I."/>
            <person name="Caccamo M."/>
            <person name="Churcher C."/>
            <person name="Scott C."/>
            <person name="Barrett J.C."/>
            <person name="Koch R."/>
            <person name="Rauch G.J."/>
            <person name="White S."/>
            <person name="Chow W."/>
            <person name="Kilian B."/>
            <person name="Quintais L.T."/>
            <person name="Guerra-Assuncao J.A."/>
            <person name="Zhou Y."/>
            <person name="Gu Y."/>
            <person name="Yen J."/>
            <person name="Vogel J.H."/>
            <person name="Eyre T."/>
            <person name="Redmond S."/>
            <person name="Banerjee R."/>
            <person name="Chi J."/>
            <person name="Fu B."/>
            <person name="Langley E."/>
            <person name="Maguire S.F."/>
            <person name="Laird G.K."/>
            <person name="Lloyd D."/>
            <person name="Kenyon E."/>
            <person name="Donaldson S."/>
            <person name="Sehra H."/>
            <person name="Almeida-King J."/>
            <person name="Loveland J."/>
            <person name="Trevanion S."/>
            <person name="Jones M."/>
            <person name="Quail M."/>
            <person name="Willey D."/>
            <person name="Hunt A."/>
            <person name="Burton J."/>
            <person name="Sims S."/>
            <person name="McLay K."/>
            <person name="Plumb B."/>
            <person name="Davis J."/>
            <person name="Clee C."/>
            <person name="Oliver K."/>
            <person name="Clark R."/>
            <person name="Riddle C."/>
            <person name="Elliot D."/>
            <person name="Threadgold G."/>
            <person name="Harden G."/>
            <person name="Ware D."/>
            <person name="Begum S."/>
            <person name="Mortimore B."/>
            <person name="Kerry G."/>
            <person name="Heath P."/>
            <person name="Phillimore B."/>
            <person name="Tracey A."/>
            <person name="Corby N."/>
            <person name="Dunn M."/>
            <person name="Johnson C."/>
            <person name="Wood J."/>
            <person name="Clark S."/>
            <person name="Pelan S."/>
            <person name="Griffiths G."/>
            <person name="Smith M."/>
            <person name="Glithero R."/>
            <person name="Howden P."/>
            <person name="Barker N."/>
            <person name="Lloyd C."/>
            <person name="Stevens C."/>
            <person name="Harley J."/>
            <person name="Holt K."/>
            <person name="Panagiotidis G."/>
            <person name="Lovell J."/>
            <person name="Beasley H."/>
            <person name="Henderson C."/>
            <person name="Gordon D."/>
            <person name="Auger K."/>
            <person name="Wright D."/>
            <person name="Collins J."/>
            <person name="Raisen C."/>
            <person name="Dyer L."/>
            <person name="Leung K."/>
            <person name="Robertson L."/>
            <person name="Ambridge K."/>
            <person name="Leongamornlert D."/>
            <person name="McGuire S."/>
            <person name="Gilderthorp R."/>
            <person name="Griffiths C."/>
            <person name="Manthravadi D."/>
            <person name="Nichol S."/>
            <person name="Barker G."/>
            <person name="Whitehead S."/>
            <person name="Kay M."/>
            <person name="Brown J."/>
            <person name="Murnane C."/>
            <person name="Gray E."/>
            <person name="Humphries M."/>
            <person name="Sycamore N."/>
            <person name="Barker D."/>
            <person name="Saunders D."/>
            <person name="Wallis J."/>
            <person name="Babbage A."/>
            <person name="Hammond S."/>
            <person name="Mashreghi-Mohammadi M."/>
            <person name="Barr L."/>
            <person name="Martin S."/>
            <person name="Wray P."/>
            <person name="Ellington A."/>
            <person name="Matthews N."/>
            <person name="Ellwood M."/>
            <person name="Woodmansey R."/>
            <person name="Clark G."/>
            <person name="Cooper J."/>
            <person name="Tromans A."/>
            <person name="Grafham D."/>
            <person name="Skuce C."/>
            <person name="Pandian R."/>
            <person name="Andrews R."/>
            <person name="Harrison E."/>
            <person name="Kimberley A."/>
            <person name="Garnett J."/>
            <person name="Fosker N."/>
            <person name="Hall R."/>
            <person name="Garner P."/>
            <person name="Kelly D."/>
            <person name="Bird C."/>
            <person name="Palmer S."/>
            <person name="Gehring I."/>
            <person name="Berger A."/>
            <person name="Dooley C.M."/>
            <person name="Ersan-Urun Z."/>
            <person name="Eser C."/>
            <person name="Geiger H."/>
            <person name="Geisler M."/>
            <person name="Karotki L."/>
            <person name="Kirn A."/>
            <person name="Konantz J."/>
            <person name="Konantz M."/>
            <person name="Oberlander M."/>
            <person name="Rudolph-Geiger S."/>
            <person name="Teucke M."/>
            <person name="Lanz C."/>
            <person name="Raddatz G."/>
            <person name="Osoegawa K."/>
            <person name="Zhu B."/>
            <person name="Rapp A."/>
            <person name="Widaa S."/>
            <person name="Langford C."/>
            <person name="Yang F."/>
            <person name="Schuster S.C."/>
            <person name="Carter N.P."/>
            <person name="Harrow J."/>
            <person name="Ning Z."/>
            <person name="Herrero J."/>
            <person name="Searle S.M."/>
            <person name="Enright A."/>
            <person name="Geisler R."/>
            <person name="Plasterk R.H."/>
            <person name="Lee C."/>
            <person name="Westerfield M."/>
            <person name="de Jong P.J."/>
            <person name="Zon L.I."/>
            <person name="Postlethwait J.H."/>
            <person name="Nusslein-Volhard C."/>
            <person name="Hubbard T.J."/>
            <person name="Roest Crollius H."/>
            <person name="Rogers J."/>
            <person name="Stemple D.L."/>
        </authorList>
    </citation>
    <scope>NUCLEOTIDE SEQUENCE [LARGE SCALE GENOMIC DNA]</scope>
    <source>
        <strain>Tuebingen</strain>
    </source>
</reference>
<reference key="2">
    <citation type="journal article" date="2020" name="Genet. Med.">
        <title>POLR1B and neural crest cell anomalies in Treacher Collins syndrome type 4.</title>
        <authorList>
            <person name="Sanchez E."/>
            <person name="Laplace-Builhe B."/>
            <person name="Mau-Them F.T."/>
            <person name="Richard E."/>
            <person name="Goldenberg A."/>
            <person name="Toler T.L."/>
            <person name="Guignard T."/>
            <person name="Gatinois V."/>
            <person name="Vincent M."/>
            <person name="Blanchet C."/>
            <person name="Boland A."/>
            <person name="Bihoreau M.T."/>
            <person name="Deleuze J.F."/>
            <person name="Olaso R."/>
            <person name="Nephi W."/>
            <person name="Luedecke H.J."/>
            <person name="Verheij J.B.G.M."/>
            <person name="Moreau-Lenoir F."/>
            <person name="Denoyelle F."/>
            <person name="Riviere J.B."/>
            <person name="Laplanche J.L."/>
            <person name="Willing M."/>
            <person name="Captier G."/>
            <person name="Apparailly F."/>
            <person name="Wieczorek D."/>
            <person name="Collet C."/>
            <person name="Djouad F."/>
            <person name="Genevieve D."/>
        </authorList>
    </citation>
    <scope>DISRUPTION PHENOTYPE</scope>
</reference>
<gene>
    <name type="primary">polr1b</name>
</gene>
<protein>
    <recommendedName>
        <fullName>DNA-directed RNA polymerase I subunit RPA2</fullName>
        <shortName>RNA polymerase I subunit 2</shortName>
        <ecNumber evidence="3">2.7.7.6</ecNumber>
    </recommendedName>
</protein>
<proteinExistence type="inferred from homology"/>
<name>RPA2_DANRE</name>